<protein>
    <recommendedName>
        <fullName>Ferredoxin-1</fullName>
    </recommendedName>
    <alternativeName>
        <fullName>Major ferredoxin</fullName>
    </alternativeName>
</protein>
<dbReference type="SMR" id="P84873"/>
<dbReference type="GO" id="GO:0009570">
    <property type="term" value="C:chloroplast stroma"/>
    <property type="evidence" value="ECO:0007669"/>
    <property type="project" value="TreeGrafter"/>
</dbReference>
<dbReference type="GO" id="GO:0051537">
    <property type="term" value="F:2 iron, 2 sulfur cluster binding"/>
    <property type="evidence" value="ECO:0007669"/>
    <property type="project" value="UniProtKB-KW"/>
</dbReference>
<dbReference type="GO" id="GO:0009055">
    <property type="term" value="F:electron transfer activity"/>
    <property type="evidence" value="ECO:0007669"/>
    <property type="project" value="InterPro"/>
</dbReference>
<dbReference type="GO" id="GO:0046872">
    <property type="term" value="F:metal ion binding"/>
    <property type="evidence" value="ECO:0007669"/>
    <property type="project" value="UniProtKB-KW"/>
</dbReference>
<dbReference type="GO" id="GO:0022900">
    <property type="term" value="P:electron transport chain"/>
    <property type="evidence" value="ECO:0007669"/>
    <property type="project" value="InterPro"/>
</dbReference>
<dbReference type="GO" id="GO:0006124">
    <property type="term" value="P:ferredoxin metabolic process"/>
    <property type="evidence" value="ECO:0007669"/>
    <property type="project" value="UniProtKB-ARBA"/>
</dbReference>
<dbReference type="CDD" id="cd00207">
    <property type="entry name" value="fer2"/>
    <property type="match status" value="1"/>
</dbReference>
<dbReference type="FunFam" id="3.10.20.30:FF:000014">
    <property type="entry name" value="Ferredoxin"/>
    <property type="match status" value="1"/>
</dbReference>
<dbReference type="Gene3D" id="3.10.20.30">
    <property type="match status" value="1"/>
</dbReference>
<dbReference type="InterPro" id="IPR036010">
    <property type="entry name" value="2Fe-2S_ferredoxin-like_sf"/>
</dbReference>
<dbReference type="InterPro" id="IPR001041">
    <property type="entry name" value="2Fe-2S_ferredoxin-type"/>
</dbReference>
<dbReference type="InterPro" id="IPR006058">
    <property type="entry name" value="2Fe2S_fd_BS"/>
</dbReference>
<dbReference type="InterPro" id="IPR012675">
    <property type="entry name" value="Beta-grasp_dom_sf"/>
</dbReference>
<dbReference type="InterPro" id="IPR010241">
    <property type="entry name" value="Fd_pln"/>
</dbReference>
<dbReference type="NCBIfam" id="TIGR02008">
    <property type="entry name" value="fdx_plant"/>
    <property type="match status" value="1"/>
</dbReference>
<dbReference type="PANTHER" id="PTHR43112">
    <property type="entry name" value="FERREDOXIN"/>
    <property type="match status" value="1"/>
</dbReference>
<dbReference type="PANTHER" id="PTHR43112:SF3">
    <property type="entry name" value="FERREDOXIN-2, CHLOROPLASTIC"/>
    <property type="match status" value="1"/>
</dbReference>
<dbReference type="Pfam" id="PF00111">
    <property type="entry name" value="Fer2"/>
    <property type="match status" value="1"/>
</dbReference>
<dbReference type="SUPFAM" id="SSF54292">
    <property type="entry name" value="2Fe-2S ferredoxin-like"/>
    <property type="match status" value="1"/>
</dbReference>
<dbReference type="PROSITE" id="PS00197">
    <property type="entry name" value="2FE2S_FER_1"/>
    <property type="match status" value="1"/>
</dbReference>
<dbReference type="PROSITE" id="PS51085">
    <property type="entry name" value="2FE2S_FER_2"/>
    <property type="match status" value="1"/>
</dbReference>
<feature type="chain" id="PRO_0000245100" description="Ferredoxin-1">
    <location>
        <begin position="1"/>
        <end position="97"/>
    </location>
</feature>
<feature type="domain" description="2Fe-2S ferredoxin-type" evidence="1 3">
    <location>
        <begin position="3"/>
        <end position="93"/>
    </location>
</feature>
<feature type="binding site" evidence="1 3">
    <location>
        <position position="39"/>
    </location>
    <ligand>
        <name>[2Fe-2S] cluster</name>
        <dbReference type="ChEBI" id="CHEBI:190135"/>
    </ligand>
</feature>
<feature type="binding site" evidence="1 3">
    <location>
        <position position="44"/>
    </location>
    <ligand>
        <name>[2Fe-2S] cluster</name>
        <dbReference type="ChEBI" id="CHEBI:190135"/>
    </ligand>
</feature>
<feature type="binding site" evidence="1 3">
    <location>
        <position position="47"/>
    </location>
    <ligand>
        <name>[2Fe-2S] cluster</name>
        <dbReference type="ChEBI" id="CHEBI:190135"/>
    </ligand>
</feature>
<feature type="binding site" evidence="1 3">
    <location>
        <position position="77"/>
    </location>
    <ligand>
        <name>[2Fe-2S] cluster</name>
        <dbReference type="ChEBI" id="CHEBI:190135"/>
    </ligand>
</feature>
<organism>
    <name type="scientific">Hyoscyamus niger</name>
    <name type="common">Black henbane</name>
    <dbReference type="NCBI Taxonomy" id="4079"/>
    <lineage>
        <taxon>Eukaryota</taxon>
        <taxon>Viridiplantae</taxon>
        <taxon>Streptophyta</taxon>
        <taxon>Embryophyta</taxon>
        <taxon>Tracheophyta</taxon>
        <taxon>Spermatophyta</taxon>
        <taxon>Magnoliopsida</taxon>
        <taxon>eudicotyledons</taxon>
        <taxon>Gunneridae</taxon>
        <taxon>Pentapetalae</taxon>
        <taxon>asterids</taxon>
        <taxon>lamiids</taxon>
        <taxon>Solanales</taxon>
        <taxon>Solanaceae</taxon>
        <taxon>Solanoideae</taxon>
        <taxon>Hyoscyameae</taxon>
        <taxon>Hyoscyamus</taxon>
    </lineage>
</organism>
<accession>P84873</accession>
<sequence length="97" mass="10393">ATYKVKLVTPDGPVEFNCPDDVYILDQAEEEGHELPYSCRAGSCSSCAGKVSAGTVDQSDGNFLDDDQIADGFVLTCVAYPQSDVTIETHKEEDLTG</sequence>
<keyword id="KW-0001">2Fe-2S</keyword>
<keyword id="KW-0150">Chloroplast</keyword>
<keyword id="KW-0903">Direct protein sequencing</keyword>
<keyword id="KW-0249">Electron transport</keyword>
<keyword id="KW-0408">Iron</keyword>
<keyword id="KW-0411">Iron-sulfur</keyword>
<keyword id="KW-0479">Metal-binding</keyword>
<keyword id="KW-0934">Plastid</keyword>
<keyword id="KW-0813">Transport</keyword>
<reference evidence="5" key="1">
    <citation type="journal article" date="2005" name="Biol. Pharm. Bull.">
        <title>Amino acid sequences of ferredoxins from Atropa belladonna and Hyoscyamus niger: their similarities to those in other tropane-alkaloid-containing plants.</title>
        <authorList>
            <person name="Mino Y."/>
            <person name="Yukita M."/>
            <person name="Hiratsuka N."/>
            <person name="Wariishi H."/>
        </authorList>
    </citation>
    <scope>PROTEIN SEQUENCE</scope>
    <source>
        <tissue evidence="4">Leaf</tissue>
    </source>
</reference>
<comment type="function">
    <text evidence="5">Ferredoxins are iron-sulfur proteins that transfer electrons in a wide variety of metabolic reactions.</text>
</comment>
<comment type="cofactor">
    <cofactor evidence="5">
        <name>[2Fe-2S] cluster</name>
        <dbReference type="ChEBI" id="CHEBI:190135"/>
    </cofactor>
    <text evidence="5">Binds 1 [2Fe-2S] cluster.</text>
</comment>
<comment type="subcellular location">
    <subcellularLocation>
        <location>Plastid</location>
        <location>Chloroplast</location>
    </subcellularLocation>
</comment>
<comment type="similarity">
    <text evidence="2">Belongs to the 2Fe2S plant-type ferredoxin family.</text>
</comment>
<name>FER1_HYONI</name>
<proteinExistence type="evidence at protein level"/>
<evidence type="ECO:0000250" key="1">
    <source>
        <dbReference type="UniProtKB" id="P0A3C8"/>
    </source>
</evidence>
<evidence type="ECO:0000255" key="2"/>
<evidence type="ECO:0000255" key="3">
    <source>
        <dbReference type="PROSITE-ProRule" id="PRU00465"/>
    </source>
</evidence>
<evidence type="ECO:0000269" key="4">
    <source>
    </source>
</evidence>
<evidence type="ECO:0000305" key="5"/>